<keyword id="KW-0963">Cytoplasm</keyword>
<keyword id="KW-0251">Elongation factor</keyword>
<keyword id="KW-0648">Protein biosynthesis</keyword>
<feature type="chain" id="PRO_1000116770" description="Elongation factor Ts">
    <location>
        <begin position="1"/>
        <end position="274"/>
    </location>
</feature>
<feature type="region of interest" description="Involved in Mg(2+) ion dislocation from EF-Tu" evidence="1">
    <location>
        <begin position="79"/>
        <end position="82"/>
    </location>
</feature>
<comment type="function">
    <text evidence="1">Associates with the EF-Tu.GDP complex and induces the exchange of GDP to GTP. It remains bound to the aminoacyl-tRNA.EF-Tu.GTP complex up to the GTP hydrolysis stage on the ribosome.</text>
</comment>
<comment type="subcellular location">
    <subcellularLocation>
        <location evidence="1">Cytoplasm</location>
    </subcellularLocation>
</comment>
<comment type="similarity">
    <text evidence="1">Belongs to the EF-Ts family.</text>
</comment>
<gene>
    <name evidence="1" type="primary">tsf</name>
    <name type="ordered locus">PGN_1587</name>
</gene>
<reference key="1">
    <citation type="journal article" date="2008" name="DNA Res.">
        <title>Determination of the genome sequence of Porphyromonas gingivalis strain ATCC 33277 and genomic comparison with strain W83 revealed extensive genome rearrangements in P. gingivalis.</title>
        <authorList>
            <person name="Naito M."/>
            <person name="Hirakawa H."/>
            <person name="Yamashita A."/>
            <person name="Ohara N."/>
            <person name="Shoji M."/>
            <person name="Yukitake H."/>
            <person name="Nakayama K."/>
            <person name="Toh H."/>
            <person name="Yoshimura F."/>
            <person name="Kuhara S."/>
            <person name="Hattori M."/>
            <person name="Hayashi T."/>
            <person name="Nakayama K."/>
        </authorList>
    </citation>
    <scope>NUCLEOTIDE SEQUENCE [LARGE SCALE GENOMIC DNA]</scope>
    <source>
        <strain>ATCC 33277 / DSM 20709 / CIP 103683 / JCM 12257 / NCTC 11834 / 2561</strain>
    </source>
</reference>
<organism>
    <name type="scientific">Porphyromonas gingivalis (strain ATCC 33277 / DSM 20709 / CIP 103683 / JCM 12257 / NCTC 11834 / 2561)</name>
    <dbReference type="NCBI Taxonomy" id="431947"/>
    <lineage>
        <taxon>Bacteria</taxon>
        <taxon>Pseudomonadati</taxon>
        <taxon>Bacteroidota</taxon>
        <taxon>Bacteroidia</taxon>
        <taxon>Bacteroidales</taxon>
        <taxon>Porphyromonadaceae</taxon>
        <taxon>Porphyromonas</taxon>
    </lineage>
</organism>
<dbReference type="EMBL" id="AP009380">
    <property type="protein sequence ID" value="BAG34106.1"/>
    <property type="molecule type" value="Genomic_DNA"/>
</dbReference>
<dbReference type="RefSeq" id="WP_005873789.1">
    <property type="nucleotide sequence ID" value="NZ_CP025930.1"/>
</dbReference>
<dbReference type="SMR" id="B2RL61"/>
<dbReference type="GeneID" id="29256762"/>
<dbReference type="KEGG" id="pgn:PGN_1587"/>
<dbReference type="eggNOG" id="COG0264">
    <property type="taxonomic scope" value="Bacteria"/>
</dbReference>
<dbReference type="HOGENOM" id="CLU_047155_0_0_10"/>
<dbReference type="OrthoDB" id="9808348at2"/>
<dbReference type="BioCyc" id="PGIN431947:G1G2V-1788-MONOMER"/>
<dbReference type="Proteomes" id="UP000008842">
    <property type="component" value="Chromosome"/>
</dbReference>
<dbReference type="GO" id="GO:0005737">
    <property type="term" value="C:cytoplasm"/>
    <property type="evidence" value="ECO:0007669"/>
    <property type="project" value="UniProtKB-SubCell"/>
</dbReference>
<dbReference type="GO" id="GO:0003746">
    <property type="term" value="F:translation elongation factor activity"/>
    <property type="evidence" value="ECO:0007669"/>
    <property type="project" value="UniProtKB-UniRule"/>
</dbReference>
<dbReference type="CDD" id="cd14275">
    <property type="entry name" value="UBA_EF-Ts"/>
    <property type="match status" value="1"/>
</dbReference>
<dbReference type="FunFam" id="1.10.8.10:FF:000001">
    <property type="entry name" value="Elongation factor Ts"/>
    <property type="match status" value="1"/>
</dbReference>
<dbReference type="Gene3D" id="1.10.286.20">
    <property type="match status" value="1"/>
</dbReference>
<dbReference type="Gene3D" id="1.10.8.10">
    <property type="entry name" value="DNA helicase RuvA subunit, C-terminal domain"/>
    <property type="match status" value="1"/>
</dbReference>
<dbReference type="Gene3D" id="3.30.479.20">
    <property type="entry name" value="Elongation factor Ts, dimerisation domain"/>
    <property type="match status" value="2"/>
</dbReference>
<dbReference type="HAMAP" id="MF_00050">
    <property type="entry name" value="EF_Ts"/>
    <property type="match status" value="1"/>
</dbReference>
<dbReference type="InterPro" id="IPR036402">
    <property type="entry name" value="EF-Ts_dimer_sf"/>
</dbReference>
<dbReference type="InterPro" id="IPR001816">
    <property type="entry name" value="Transl_elong_EFTs/EF1B"/>
</dbReference>
<dbReference type="InterPro" id="IPR014039">
    <property type="entry name" value="Transl_elong_EFTs/EF1B_dimer"/>
</dbReference>
<dbReference type="InterPro" id="IPR018101">
    <property type="entry name" value="Transl_elong_Ts_CS"/>
</dbReference>
<dbReference type="InterPro" id="IPR009060">
    <property type="entry name" value="UBA-like_sf"/>
</dbReference>
<dbReference type="NCBIfam" id="TIGR00116">
    <property type="entry name" value="tsf"/>
    <property type="match status" value="1"/>
</dbReference>
<dbReference type="PANTHER" id="PTHR11741">
    <property type="entry name" value="ELONGATION FACTOR TS"/>
    <property type="match status" value="1"/>
</dbReference>
<dbReference type="PANTHER" id="PTHR11741:SF0">
    <property type="entry name" value="ELONGATION FACTOR TS, MITOCHONDRIAL"/>
    <property type="match status" value="1"/>
</dbReference>
<dbReference type="Pfam" id="PF00889">
    <property type="entry name" value="EF_TS"/>
    <property type="match status" value="1"/>
</dbReference>
<dbReference type="SUPFAM" id="SSF54713">
    <property type="entry name" value="Elongation factor Ts (EF-Ts), dimerisation domain"/>
    <property type="match status" value="1"/>
</dbReference>
<dbReference type="SUPFAM" id="SSF46934">
    <property type="entry name" value="UBA-like"/>
    <property type="match status" value="1"/>
</dbReference>
<dbReference type="PROSITE" id="PS01126">
    <property type="entry name" value="EF_TS_1"/>
    <property type="match status" value="1"/>
</dbReference>
<dbReference type="PROSITE" id="PS01127">
    <property type="entry name" value="EF_TS_2"/>
    <property type="match status" value="1"/>
</dbReference>
<name>EFTS_PORG3</name>
<sequence>MAVTIQDIAKLRKMSGAGMMDCKNALEESNNDFEKAMEIIRKKGQAVAAKRSDREAAEGCVLSADKDGFAAIVALKCETDFVAKNAEFIELTQNILNTAMDKKPANKEELLALPLADGRTIADHITDRIGVTGEKMELGAYEYISGASSISYIHPGNKLATVAAFNEAIEHQMARDIAMQIAAMNPVAVLPEQVDQHIIDQELQIAREKALEAGKPENLLDRIAQGALQKYYKENTLLQQEFVKDSKLTIEQYLHTGSKTLTVVGFKRFTLNAD</sequence>
<proteinExistence type="inferred from homology"/>
<evidence type="ECO:0000255" key="1">
    <source>
        <dbReference type="HAMAP-Rule" id="MF_00050"/>
    </source>
</evidence>
<protein>
    <recommendedName>
        <fullName evidence="1">Elongation factor Ts</fullName>
        <shortName evidence="1">EF-Ts</shortName>
    </recommendedName>
</protein>
<accession>B2RL61</accession>